<protein>
    <recommendedName>
        <fullName evidence="3">Metallo-beta-lactamase type 2</fullName>
        <ecNumber evidence="1">3.5.2.6</ecNumber>
    </recommendedName>
    <alternativeName>
        <fullName evidence="1">B2 metallo-beta-lactamase</fullName>
    </alternativeName>
    <alternativeName>
        <fullName evidence="1">Beta-lactamase type II</fullName>
    </alternativeName>
    <alternativeName>
        <fullName evidence="1">Carbapenem-hydrolyzing beta-lactamase BlaB-7</fullName>
        <shortName evidence="1">CHbetaL-7</shortName>
    </alternativeName>
    <alternativeName>
        <fullName evidence="1">Class B carbapenemase BlaB-7</fullName>
    </alternativeName>
    <alternativeName>
        <fullName evidence="1">Metallo-beta-lactamase type II</fullName>
    </alternativeName>
</protein>
<sequence>MKGLKGLLVLALGFTGLQVFGQQNPDIKIEKLKDNLYVYTTYNTFKGTKYAANAVYMVTDKGIVVIDSPWGEDKFKSFTDEIYKKHGKKVIMNIATHSHDDRAGGLEYFGKLGAKTYSTKMTDSILAKENKPRAKYTFDNNKSFKVGKTEFQVYYPGKGHTADNVVVWFPKDKVLVGGCIVKSGDSKDLGFIGEAYVNDWTQSIHNIQQKFPDVQYVVAGHDDWKDQTSIQHTLDLISEYQQKQKASN</sequence>
<dbReference type="EC" id="3.5.2.6" evidence="1"/>
<dbReference type="EMBL" id="AF189304">
    <property type="protein sequence ID" value="AAF89160.1"/>
    <property type="molecule type" value="Genomic_DNA"/>
</dbReference>
<dbReference type="SMR" id="Q9KJA8"/>
<dbReference type="CARD" id="ARO:3005555">
    <property type="molecule name" value="BlaB-7"/>
    <property type="mechanism identifier" value="ARO:0001004"/>
    <property type="mechanism name" value="antibiotic inactivation"/>
</dbReference>
<dbReference type="KEGG" id="ag:AAF89160"/>
<dbReference type="GO" id="GO:0042597">
    <property type="term" value="C:periplasmic space"/>
    <property type="evidence" value="ECO:0007669"/>
    <property type="project" value="UniProtKB-SubCell"/>
</dbReference>
<dbReference type="GO" id="GO:0008800">
    <property type="term" value="F:beta-lactamase activity"/>
    <property type="evidence" value="ECO:0007669"/>
    <property type="project" value="UniProtKB-EC"/>
</dbReference>
<dbReference type="GO" id="GO:0008270">
    <property type="term" value="F:zinc ion binding"/>
    <property type="evidence" value="ECO:0007669"/>
    <property type="project" value="InterPro"/>
</dbReference>
<dbReference type="GO" id="GO:0017001">
    <property type="term" value="P:antibiotic catabolic process"/>
    <property type="evidence" value="ECO:0007669"/>
    <property type="project" value="InterPro"/>
</dbReference>
<dbReference type="GO" id="GO:0046677">
    <property type="term" value="P:response to antibiotic"/>
    <property type="evidence" value="ECO:0007669"/>
    <property type="project" value="UniProtKB-KW"/>
</dbReference>
<dbReference type="CDD" id="cd16316">
    <property type="entry name" value="BlaB-like_MBL-B1"/>
    <property type="match status" value="1"/>
</dbReference>
<dbReference type="FunFam" id="3.60.15.10:FF:000096">
    <property type="entry name" value="Metallo-beta-lactamase type 2"/>
    <property type="match status" value="1"/>
</dbReference>
<dbReference type="Gene3D" id="3.60.15.10">
    <property type="entry name" value="Ribonuclease Z/Hydroxyacylglutathione hydrolase-like"/>
    <property type="match status" value="1"/>
</dbReference>
<dbReference type="InterPro" id="IPR001018">
    <property type="entry name" value="Beta-lactamase_class-B_CS"/>
</dbReference>
<dbReference type="InterPro" id="IPR001279">
    <property type="entry name" value="Metallo-B-lactamas"/>
</dbReference>
<dbReference type="InterPro" id="IPR050855">
    <property type="entry name" value="NDM-1-like"/>
</dbReference>
<dbReference type="InterPro" id="IPR036866">
    <property type="entry name" value="RibonucZ/Hydroxyglut_hydro"/>
</dbReference>
<dbReference type="NCBIfam" id="NF012229">
    <property type="entry name" value="bla_class_B_core"/>
    <property type="match status" value="1"/>
</dbReference>
<dbReference type="NCBIfam" id="NF033088">
    <property type="entry name" value="bla_subclass_B1"/>
    <property type="match status" value="1"/>
</dbReference>
<dbReference type="NCBIfam" id="NF033107">
    <property type="entry name" value="blaB"/>
    <property type="match status" value="1"/>
</dbReference>
<dbReference type="NCBIfam" id="NF012146">
    <property type="entry name" value="blaB-IND-MUS"/>
    <property type="match status" value="1"/>
</dbReference>
<dbReference type="PANTHER" id="PTHR42951:SF4">
    <property type="entry name" value="ACYL-COENZYME A THIOESTERASE MBLAC2"/>
    <property type="match status" value="1"/>
</dbReference>
<dbReference type="PANTHER" id="PTHR42951">
    <property type="entry name" value="METALLO-BETA-LACTAMASE DOMAIN-CONTAINING"/>
    <property type="match status" value="1"/>
</dbReference>
<dbReference type="Pfam" id="PF00753">
    <property type="entry name" value="Lactamase_B"/>
    <property type="match status" value="1"/>
</dbReference>
<dbReference type="SMART" id="SM00849">
    <property type="entry name" value="Lactamase_B"/>
    <property type="match status" value="1"/>
</dbReference>
<dbReference type="SUPFAM" id="SSF56281">
    <property type="entry name" value="Metallo-hydrolase/oxidoreductase"/>
    <property type="match status" value="1"/>
</dbReference>
<dbReference type="PROSITE" id="PS00743">
    <property type="entry name" value="BETA_LACTAMASE_B_1"/>
    <property type="match status" value="1"/>
</dbReference>
<dbReference type="PROSITE" id="PS00744">
    <property type="entry name" value="BETA_LACTAMASE_B_2"/>
    <property type="match status" value="1"/>
</dbReference>
<feature type="signal peptide" evidence="1 2">
    <location>
        <begin position="1"/>
        <end position="21"/>
    </location>
</feature>
<feature type="chain" id="PRO_0000016955" description="Metallo-beta-lactamase type 2">
    <location>
        <begin position="22"/>
        <end position="248"/>
    </location>
</feature>
<feature type="binding site" evidence="1">
    <location>
        <position position="97"/>
    </location>
    <ligand>
        <name>Zn(2+)</name>
        <dbReference type="ChEBI" id="CHEBI:29105"/>
        <label>1</label>
    </ligand>
</feature>
<feature type="binding site" evidence="1">
    <location>
        <position position="99"/>
    </location>
    <ligand>
        <name>Zn(2+)</name>
        <dbReference type="ChEBI" id="CHEBI:29105"/>
        <label>1</label>
    </ligand>
</feature>
<feature type="binding site" evidence="1">
    <location>
        <position position="101"/>
    </location>
    <ligand>
        <name>Zn(2+)</name>
        <dbReference type="ChEBI" id="CHEBI:29105"/>
        <label>2</label>
    </ligand>
</feature>
<feature type="binding site" evidence="1">
    <location>
        <position position="160"/>
    </location>
    <ligand>
        <name>Zn(2+)</name>
        <dbReference type="ChEBI" id="CHEBI:29105"/>
        <label>1</label>
    </ligand>
</feature>
<feature type="binding site" evidence="1">
    <location>
        <position position="179"/>
    </location>
    <ligand>
        <name>Zn(2+)</name>
        <dbReference type="ChEBI" id="CHEBI:29105"/>
        <label>2</label>
    </ligand>
</feature>
<feature type="binding site" evidence="1">
    <location>
        <position position="182"/>
    </location>
    <ligand>
        <name>substrate</name>
    </ligand>
</feature>
<feature type="binding site" evidence="1">
    <location>
        <position position="221"/>
    </location>
    <ligand>
        <name>Zn(2+)</name>
        <dbReference type="ChEBI" id="CHEBI:29105"/>
        <label>2</label>
    </ligand>
</feature>
<comment type="function">
    <text evidence="1">Confers resistance to the different beta-lactams antibiotics (penicillin, cephalosporin and carbapenem) via the hydrolysis of the beta-lactam ring.</text>
</comment>
<comment type="catalytic activity">
    <reaction evidence="1">
        <text>a beta-lactam + H2O = a substituted beta-amino acid</text>
        <dbReference type="Rhea" id="RHEA:20401"/>
        <dbReference type="ChEBI" id="CHEBI:15377"/>
        <dbReference type="ChEBI" id="CHEBI:35627"/>
        <dbReference type="ChEBI" id="CHEBI:140347"/>
        <dbReference type="EC" id="3.5.2.6"/>
    </reaction>
</comment>
<comment type="cofactor">
    <cofactor evidence="1">
        <name>Zn(2+)</name>
        <dbReference type="ChEBI" id="CHEBI:29105"/>
    </cofactor>
    <text evidence="1">Binds 2 Zn(2+) ions per subunit.</text>
</comment>
<comment type="subunit">
    <text evidence="1">Monomer.</text>
</comment>
<comment type="subcellular location">
    <subcellularLocation>
        <location evidence="3">Periplasm</location>
    </subcellularLocation>
</comment>
<comment type="similarity">
    <text evidence="3">Belongs to the metallo-beta-lactamase superfamily. Class-B beta-lactamase family.</text>
</comment>
<accession>Q9KJA8</accession>
<keyword id="KW-0046">Antibiotic resistance</keyword>
<keyword id="KW-0378">Hydrolase</keyword>
<keyword id="KW-0479">Metal-binding</keyword>
<keyword id="KW-0574">Periplasm</keyword>
<keyword id="KW-0732">Signal</keyword>
<keyword id="KW-0862">Zinc</keyword>
<organism>
    <name type="scientific">Elizabethkingia meningoseptica</name>
    <name type="common">Chryseobacterium meningosepticum</name>
    <dbReference type="NCBI Taxonomy" id="238"/>
    <lineage>
        <taxon>Bacteria</taxon>
        <taxon>Pseudomonadati</taxon>
        <taxon>Bacteroidota</taxon>
        <taxon>Flavobacteriia</taxon>
        <taxon>Flavobacteriales</taxon>
        <taxon>Weeksellaceae</taxon>
        <taxon>Elizabethkingia</taxon>
    </lineage>
</organism>
<evidence type="ECO:0000250" key="1">
    <source>
        <dbReference type="UniProtKB" id="O08498"/>
    </source>
</evidence>
<evidence type="ECO:0000255" key="2"/>
<evidence type="ECO:0000305" key="3"/>
<gene>
    <name type="primary">blaB7</name>
    <name evidence="1" type="synonym">blaB</name>
</gene>
<reference key="1">
    <citation type="journal article" date="2000" name="Antimicrob. Agents Chemother.">
        <title>Molecular and biochemical heterogeneity of class B carbapenem-hydrolyzing beta-lactamases in Chryseobacterium meningosepticum.</title>
        <authorList>
            <person name="Bellais S."/>
            <person name="Aubert D."/>
            <person name="Naas T."/>
            <person name="Nordmann P."/>
        </authorList>
    </citation>
    <scope>NUCLEOTIDE SEQUENCE [GENOMIC DNA]</scope>
    <source>
        <strain>AB1572</strain>
    </source>
</reference>
<proteinExistence type="inferred from homology"/>
<name>BLAB7_ELIME</name>